<evidence type="ECO:0000250" key="1">
    <source>
        <dbReference type="UniProtKB" id="Q640R3"/>
    </source>
</evidence>
<evidence type="ECO:0000255" key="2"/>
<evidence type="ECO:0000255" key="3">
    <source>
        <dbReference type="PROSITE-ProRule" id="PRU00114"/>
    </source>
</evidence>
<evidence type="ECO:0000256" key="4">
    <source>
        <dbReference type="SAM" id="MobiDB-lite"/>
    </source>
</evidence>
<evidence type="ECO:0000269" key="5">
    <source>
    </source>
</evidence>
<evidence type="ECO:0000269" key="6">
    <source>
    </source>
</evidence>
<evidence type="ECO:0000269" key="7">
    <source>
    </source>
</evidence>
<evidence type="ECO:0000269" key="8">
    <source>
    </source>
</evidence>
<evidence type="ECO:0000269" key="9">
    <source>
    </source>
</evidence>
<evidence type="ECO:0000269" key="10">
    <source>
    </source>
</evidence>
<evidence type="ECO:0000269" key="11">
    <source>
    </source>
</evidence>
<evidence type="ECO:0000269" key="12">
    <source>
    </source>
</evidence>
<evidence type="ECO:0000303" key="13">
    <source>
    </source>
</evidence>
<evidence type="ECO:0000303" key="14">
    <source>
    </source>
</evidence>
<evidence type="ECO:0000303" key="15">
    <source>
    </source>
</evidence>
<evidence type="ECO:0000305" key="16"/>
<evidence type="ECO:0000312" key="17">
    <source>
        <dbReference type="EMBL" id="AAI13563.1"/>
    </source>
</evidence>
<evidence type="ECO:0000312" key="18">
    <source>
        <dbReference type="EMBL" id="AAQ93018.1"/>
    </source>
</evidence>
<evidence type="ECO:0000312" key="19">
    <source>
        <dbReference type="EMBL" id="BAC05297.1"/>
    </source>
</evidence>
<evidence type="ECO:0000312" key="20">
    <source>
        <dbReference type="HGNC" id="HGNC:26361"/>
    </source>
</evidence>
<protein>
    <recommendedName>
        <fullName>Hepatic and glial cell adhesion molecule</fullName>
        <shortName evidence="15">glialCAM</shortName>
    </recommendedName>
    <alternativeName>
        <fullName>Hepatocyte cell adhesion molecule</fullName>
        <shortName>Protein hepaCAM</shortName>
    </alternativeName>
</protein>
<dbReference type="EMBL" id="AY047587">
    <property type="protein sequence ID" value="AAQ93018.1"/>
    <property type="molecule type" value="mRNA"/>
</dbReference>
<dbReference type="EMBL" id="AK098396">
    <property type="protein sequence ID" value="BAC05297.1"/>
    <property type="molecule type" value="mRNA"/>
</dbReference>
<dbReference type="EMBL" id="AK122595">
    <property type="protein sequence ID" value="BAC85486.1"/>
    <property type="molecule type" value="mRNA"/>
</dbReference>
<dbReference type="EMBL" id="BC104831">
    <property type="protein sequence ID" value="AAI04832.1"/>
    <property type="molecule type" value="mRNA"/>
</dbReference>
<dbReference type="EMBL" id="BC113562">
    <property type="protein sequence ID" value="AAI13563.1"/>
    <property type="molecule type" value="mRNA"/>
</dbReference>
<dbReference type="EMBL" id="AL834419">
    <property type="protein sequence ID" value="CAD39081.1"/>
    <property type="molecule type" value="mRNA"/>
</dbReference>
<dbReference type="CCDS" id="CCDS8456.1">
    <molecule id="Q14CZ8-1"/>
</dbReference>
<dbReference type="RefSeq" id="NP_689935.2">
    <molecule id="Q14CZ8-1"/>
    <property type="nucleotide sequence ID" value="NM_152722.5"/>
</dbReference>
<dbReference type="PDB" id="7UQC">
    <property type="method" value="X-ray"/>
    <property type="resolution" value="2.65 A"/>
    <property type="chains" value="C/F=370-389"/>
</dbReference>
<dbReference type="PDBsum" id="7UQC"/>
<dbReference type="SMR" id="Q14CZ8"/>
<dbReference type="BioGRID" id="128639">
    <property type="interactions" value="4"/>
</dbReference>
<dbReference type="CORUM" id="Q14CZ8"/>
<dbReference type="FunCoup" id="Q14CZ8">
    <property type="interactions" value="125"/>
</dbReference>
<dbReference type="IntAct" id="Q14CZ8">
    <property type="interactions" value="2"/>
</dbReference>
<dbReference type="STRING" id="9606.ENSP00000298251"/>
<dbReference type="TCDB" id="8.A.23.1.5">
    <property type="family name" value="the basigin (basigin) family"/>
</dbReference>
<dbReference type="GlyCosmos" id="Q14CZ8">
    <property type="glycosylation" value="5 sites, 1 glycan"/>
</dbReference>
<dbReference type="GlyGen" id="Q14CZ8">
    <property type="glycosylation" value="5 sites, 1 O-linked glycan (1 site)"/>
</dbReference>
<dbReference type="iPTMnet" id="Q14CZ8"/>
<dbReference type="PhosphoSitePlus" id="Q14CZ8"/>
<dbReference type="SwissPalm" id="Q14CZ8"/>
<dbReference type="BioMuta" id="HEPACAM"/>
<dbReference type="DMDM" id="121945515"/>
<dbReference type="jPOST" id="Q14CZ8"/>
<dbReference type="MassIVE" id="Q14CZ8"/>
<dbReference type="PaxDb" id="9606-ENSP00000298251"/>
<dbReference type="PeptideAtlas" id="Q14CZ8"/>
<dbReference type="ProteomicsDB" id="60339">
    <molecule id="Q14CZ8-1"/>
</dbReference>
<dbReference type="ProteomicsDB" id="60340">
    <molecule id="Q14CZ8-2"/>
</dbReference>
<dbReference type="Antibodypedia" id="2574">
    <property type="antibodies" value="191 antibodies from 31 providers"/>
</dbReference>
<dbReference type="DNASU" id="220296"/>
<dbReference type="Ensembl" id="ENST00000298251.5">
    <molecule id="Q14CZ8-1"/>
    <property type="protein sequence ID" value="ENSP00000298251.4"/>
    <property type="gene ID" value="ENSG00000165478.8"/>
</dbReference>
<dbReference type="GeneID" id="220296"/>
<dbReference type="KEGG" id="hsa:220296"/>
<dbReference type="MANE-Select" id="ENST00000298251.5">
    <property type="protein sequence ID" value="ENSP00000298251.4"/>
    <property type="RefSeq nucleotide sequence ID" value="NM_152722.5"/>
    <property type="RefSeq protein sequence ID" value="NP_689935.2"/>
</dbReference>
<dbReference type="UCSC" id="uc001qbk.4">
    <molecule id="Q14CZ8-1"/>
    <property type="organism name" value="human"/>
</dbReference>
<dbReference type="AGR" id="HGNC:26361"/>
<dbReference type="CTD" id="220296"/>
<dbReference type="DisGeNET" id="220296"/>
<dbReference type="GeneCards" id="HEPACAM"/>
<dbReference type="GeneReviews" id="HEPACAM"/>
<dbReference type="HGNC" id="HGNC:26361">
    <property type="gene designation" value="HEPACAM"/>
</dbReference>
<dbReference type="HPA" id="ENSG00000165478">
    <property type="expression patterns" value="Tissue enhanced (adipose tissue, brain, liver)"/>
</dbReference>
<dbReference type="MalaCards" id="HEPACAM"/>
<dbReference type="MIM" id="611642">
    <property type="type" value="gene"/>
</dbReference>
<dbReference type="MIM" id="613925">
    <property type="type" value="phenotype"/>
</dbReference>
<dbReference type="MIM" id="613926">
    <property type="type" value="phenotype"/>
</dbReference>
<dbReference type="neXtProt" id="NX_Q14CZ8"/>
<dbReference type="OpenTargets" id="ENSG00000165478"/>
<dbReference type="Orphanet" id="210548">
    <property type="disease" value="Macrocephaly-intellectual disability-autism syndrome"/>
</dbReference>
<dbReference type="Orphanet" id="2478">
    <property type="disease" value="Megalencephalic leukoencephalopathy with subcortical cysts"/>
</dbReference>
<dbReference type="PharmGKB" id="PA162390830"/>
<dbReference type="VEuPathDB" id="HostDB:ENSG00000165478"/>
<dbReference type="eggNOG" id="ENOG502QPJB">
    <property type="taxonomic scope" value="Eukaryota"/>
</dbReference>
<dbReference type="GeneTree" id="ENSGT01130000278319"/>
<dbReference type="HOGENOM" id="CLU_058570_1_0_1"/>
<dbReference type="InParanoid" id="Q14CZ8"/>
<dbReference type="OMA" id="DRKNPMA"/>
<dbReference type="OrthoDB" id="9891523at2759"/>
<dbReference type="PAN-GO" id="Q14CZ8">
    <property type="GO annotations" value="1 GO annotation based on evolutionary models"/>
</dbReference>
<dbReference type="PhylomeDB" id="Q14CZ8"/>
<dbReference type="TreeFam" id="TF331199"/>
<dbReference type="PathwayCommons" id="Q14CZ8"/>
<dbReference type="SignaLink" id="Q14CZ8"/>
<dbReference type="BioGRID-ORCS" id="220296">
    <property type="hits" value="11 hits in 1153 CRISPR screens"/>
</dbReference>
<dbReference type="ChiTaRS" id="HEPACAM">
    <property type="organism name" value="human"/>
</dbReference>
<dbReference type="GenomeRNAi" id="220296"/>
<dbReference type="Pharos" id="Q14CZ8">
    <property type="development level" value="Tbio"/>
</dbReference>
<dbReference type="PRO" id="PR:Q14CZ8"/>
<dbReference type="Proteomes" id="UP000005640">
    <property type="component" value="Chromosome 11"/>
</dbReference>
<dbReference type="RNAct" id="Q14CZ8">
    <property type="molecule type" value="protein"/>
</dbReference>
<dbReference type="Bgee" id="ENSG00000165478">
    <property type="expression patterns" value="Expressed in lateral globus pallidus and 128 other cell types or tissues"/>
</dbReference>
<dbReference type="GO" id="GO:0097450">
    <property type="term" value="C:astrocyte end-foot"/>
    <property type="evidence" value="ECO:0000314"/>
    <property type="project" value="UniProtKB"/>
</dbReference>
<dbReference type="GO" id="GO:0005911">
    <property type="term" value="C:cell-cell junction"/>
    <property type="evidence" value="ECO:0000314"/>
    <property type="project" value="MGI"/>
</dbReference>
<dbReference type="GO" id="GO:0005737">
    <property type="term" value="C:cytoplasm"/>
    <property type="evidence" value="ECO:0007669"/>
    <property type="project" value="UniProtKB-SubCell"/>
</dbReference>
<dbReference type="GO" id="GO:0005886">
    <property type="term" value="C:plasma membrane"/>
    <property type="evidence" value="ECO:0007669"/>
    <property type="project" value="UniProtKB-SubCell"/>
</dbReference>
<dbReference type="GO" id="GO:0007155">
    <property type="term" value="P:cell adhesion"/>
    <property type="evidence" value="ECO:0007669"/>
    <property type="project" value="UniProtKB-KW"/>
</dbReference>
<dbReference type="GO" id="GO:0006955">
    <property type="term" value="P:immune response"/>
    <property type="evidence" value="ECO:0000318"/>
    <property type="project" value="GO_Central"/>
</dbReference>
<dbReference type="GO" id="GO:0150105">
    <property type="term" value="P:protein localization to cell-cell junction"/>
    <property type="evidence" value="ECO:0000315"/>
    <property type="project" value="MGI"/>
</dbReference>
<dbReference type="GO" id="GO:0051726">
    <property type="term" value="P:regulation of cell cycle"/>
    <property type="evidence" value="ECO:0007669"/>
    <property type="project" value="UniProtKB-KW"/>
</dbReference>
<dbReference type="FunFam" id="2.60.40.10:FF:000922">
    <property type="entry name" value="hepatocyte cell adhesion molecule isoform X1"/>
    <property type="match status" value="1"/>
</dbReference>
<dbReference type="FunFam" id="2.60.40.10:FF:000786">
    <property type="entry name" value="hepatocyte cell adhesion molecule isoform X2"/>
    <property type="match status" value="1"/>
</dbReference>
<dbReference type="Gene3D" id="2.60.40.10">
    <property type="entry name" value="Immunoglobulins"/>
    <property type="match status" value="2"/>
</dbReference>
<dbReference type="InterPro" id="IPR052280">
    <property type="entry name" value="HEPACAM_domain"/>
</dbReference>
<dbReference type="InterPro" id="IPR007110">
    <property type="entry name" value="Ig-like_dom"/>
</dbReference>
<dbReference type="InterPro" id="IPR036179">
    <property type="entry name" value="Ig-like_dom_sf"/>
</dbReference>
<dbReference type="InterPro" id="IPR013783">
    <property type="entry name" value="Ig-like_fold"/>
</dbReference>
<dbReference type="InterPro" id="IPR003599">
    <property type="entry name" value="Ig_sub"/>
</dbReference>
<dbReference type="InterPro" id="IPR003598">
    <property type="entry name" value="Ig_sub2"/>
</dbReference>
<dbReference type="InterPro" id="IPR013106">
    <property type="entry name" value="Ig_V-set"/>
</dbReference>
<dbReference type="PANTHER" id="PTHR44888">
    <property type="entry name" value="HEPACAM FAMILY MEMBER 2-RELATED"/>
    <property type="match status" value="1"/>
</dbReference>
<dbReference type="PANTHER" id="PTHR44888:SF2">
    <property type="entry name" value="HEPATIC AND GLIAL CELL ADHESION MOLECULE"/>
    <property type="match status" value="1"/>
</dbReference>
<dbReference type="Pfam" id="PF13927">
    <property type="entry name" value="Ig_3"/>
    <property type="match status" value="1"/>
</dbReference>
<dbReference type="Pfam" id="PF07686">
    <property type="entry name" value="V-set"/>
    <property type="match status" value="1"/>
</dbReference>
<dbReference type="SMART" id="SM00409">
    <property type="entry name" value="IG"/>
    <property type="match status" value="2"/>
</dbReference>
<dbReference type="SMART" id="SM00408">
    <property type="entry name" value="IGc2"/>
    <property type="match status" value="1"/>
</dbReference>
<dbReference type="SUPFAM" id="SSF48726">
    <property type="entry name" value="Immunoglobulin"/>
    <property type="match status" value="2"/>
</dbReference>
<dbReference type="PROSITE" id="PS50835">
    <property type="entry name" value="IG_LIKE"/>
    <property type="match status" value="1"/>
</dbReference>
<organism>
    <name type="scientific">Homo sapiens</name>
    <name type="common">Human</name>
    <dbReference type="NCBI Taxonomy" id="9606"/>
    <lineage>
        <taxon>Eukaryota</taxon>
        <taxon>Metazoa</taxon>
        <taxon>Chordata</taxon>
        <taxon>Craniata</taxon>
        <taxon>Vertebrata</taxon>
        <taxon>Euteleostomi</taxon>
        <taxon>Mammalia</taxon>
        <taxon>Eutheria</taxon>
        <taxon>Euarchontoglires</taxon>
        <taxon>Primates</taxon>
        <taxon>Haplorrhini</taxon>
        <taxon>Catarrhini</taxon>
        <taxon>Hominidae</taxon>
        <taxon>Homo</taxon>
    </lineage>
</organism>
<sequence length="416" mass="46026">MKRERGALSRASRALRLAPFVYLLLIQTDPLEGVNITSPVRLIHGTVGKSALLSVQYSSTSSDRPVVKWQLKRDKPVTVVQSIGTEVIGTLRPDYRDRIRLFENGSLLLSDLQLADEGTYEVEISITDDTFTGEKTINLTVDVPISRPQVLVASTTVLELSEAFTLNCSHENGTKPSYTWLKDGKPLLNDSRMLLSPDQKVLTITRVLMEDDDLYSCMVENPISQGRSLPVKITVYRRSSLYIILSTGGIFLLVTLVTVCACWKPSKRKQKKLEKQNSLEYMDQNDDRLKPEADTLPRSGEQERKNPMALYILKDKDSPETEENPAPEPRSATEPGPPGYSVSPAVPGRSPGLPIRSARRYPRSPARSPATGRTHSSPPRAPSSPGRSRSASRTLRTAGVHIIREQDEAGPVEISA</sequence>
<accession>Q14CZ8</accession>
<accession>Q67IP8</accession>
<accession>Q6ZWL4</accession>
<accession>Q8N7I3</accession>
<accession>Q8ND35</accession>
<gene>
    <name evidence="14 20" type="primary">HEPACAM</name>
</gene>
<name>HECAM_HUMAN</name>
<proteinExistence type="evidence at protein level"/>
<feature type="signal peptide" evidence="2">
    <location>
        <begin position="1"/>
        <end position="33"/>
    </location>
</feature>
<feature type="chain" id="PRO_0000298777" description="Hepatic and glial cell adhesion molecule" evidence="2">
    <location>
        <begin position="34"/>
        <end position="416"/>
    </location>
</feature>
<feature type="topological domain" description="Extracellular" evidence="2">
    <location>
        <begin position="34"/>
        <end position="240"/>
    </location>
</feature>
<feature type="transmembrane region" description="Helical" evidence="2">
    <location>
        <begin position="241"/>
        <end position="261"/>
    </location>
</feature>
<feature type="topological domain" description="Cytoplasmic" evidence="2">
    <location>
        <begin position="262"/>
        <end position="416"/>
    </location>
</feature>
<feature type="domain" description="Ig-like V-type" evidence="2">
    <location>
        <begin position="34"/>
        <end position="142"/>
    </location>
</feature>
<feature type="domain" description="Ig-like C2-type" evidence="2">
    <location>
        <begin position="148"/>
        <end position="234"/>
    </location>
</feature>
<feature type="region of interest" description="Disordered" evidence="4">
    <location>
        <begin position="273"/>
        <end position="416"/>
    </location>
</feature>
<feature type="compositionally biased region" description="Basic and acidic residues" evidence="4">
    <location>
        <begin position="285"/>
        <end position="306"/>
    </location>
</feature>
<feature type="compositionally biased region" description="Low complexity" evidence="4">
    <location>
        <begin position="383"/>
        <end position="398"/>
    </location>
</feature>
<feature type="modified residue" description="Phosphoserine" evidence="1">
    <location>
        <position position="278"/>
    </location>
</feature>
<feature type="modified residue" description="Phosphoserine" evidence="1">
    <location>
        <position position="350"/>
    </location>
</feature>
<feature type="modified residue" description="Phosphoserine" evidence="1">
    <location>
        <position position="377"/>
    </location>
</feature>
<feature type="glycosylation site" description="N-linked (GlcNAc...) asparagine" evidence="2">
    <location>
        <position position="35"/>
    </location>
</feature>
<feature type="glycosylation site" description="N-linked (GlcNAc...) asparagine" evidence="2">
    <location>
        <position position="138"/>
    </location>
</feature>
<feature type="glycosylation site" description="N-linked (GlcNAc...) asparagine" evidence="2">
    <location>
        <position position="167"/>
    </location>
</feature>
<feature type="glycosylation site" description="N-linked (GlcNAc...) asparagine" evidence="2">
    <location>
        <position position="189"/>
    </location>
</feature>
<feature type="disulfide bond" evidence="3">
    <location>
        <begin position="168"/>
        <end position="217"/>
    </location>
</feature>
<feature type="splice variant" id="VSP_052497" description="In isoform 2." evidence="13">
    <original>ADTLPRSGEQERKNPMALYILKDKDSPETEENPAPEPRSATEPGPPGYSVSPAVPGRSPGLPIRSARRYPRSPAR</original>
    <variation>GELPATQSPIPSTIRSVGCWEKAELGDKENSSAGTLPSDLGASKGKEPEPASLASSHSLPRRHAMPSTLSVSVHE</variation>
    <location>
        <begin position="293"/>
        <end position="367"/>
    </location>
</feature>
<feature type="splice variant" id="VSP_052498" description="In isoform 2." evidence="13">
    <location>
        <begin position="368"/>
        <end position="416"/>
    </location>
</feature>
<feature type="sequence variant" id="VAR_065849" description="In MLC2A." evidence="9">
    <original>L</original>
    <variation>H</variation>
    <location>
        <position position="23"/>
    </location>
</feature>
<feature type="sequence variant" id="VAR_065850" description="In MLC2B; retains the interaction with CLCN2; loss of CLCN2 targeting to cell junctions; dbSNP:rs387907054." evidence="9 11">
    <original>G</original>
    <variation>D</variation>
    <location>
        <position position="89"/>
    </location>
</feature>
<feature type="sequence variant" id="VAR_065851" description="In MLC2B; dbSNP:rs387907053." evidence="9">
    <original>G</original>
    <variation>S</variation>
    <location>
        <position position="89"/>
    </location>
</feature>
<feature type="sequence variant" id="VAR_065852" description="In MLC2A; retains the interaction with CLCN2; loss of CLCN2 targeting to cell junctions; dbSNP:rs387907050." evidence="9 11">
    <original>R</original>
    <variation>Q</variation>
    <location>
        <position position="92"/>
    </location>
</feature>
<feature type="sequence variant" id="VAR_065853" description="In MLC2B; retains the interaction with CLCN2; loss of CLCN2 targeting to cell junctions; dbSNP:rs387907055." evidence="9 11">
    <original>R</original>
    <variation>W</variation>
    <location>
        <position position="92"/>
    </location>
</feature>
<feature type="sequence variant" id="VAR_065854" description="In MLC2A; retains the interaction with CLCN2; loss of CLCN2 targeting to cell junctions; dbSNP:rs387907052." evidence="9 11">
    <original>R</original>
    <variation>C</variation>
    <location>
        <position position="98"/>
    </location>
</feature>
<feature type="sequence variant" id="VAR_065855" description="In MLC2B; dbSNP:rs1947184803." evidence="9">
    <original>D</original>
    <variation>N</variation>
    <location>
        <position position="128"/>
    </location>
</feature>
<feature type="sequence variant" id="VAR_065856" description="In MLC2B." evidence="9">
    <location>
        <position position="135"/>
    </location>
</feature>
<feature type="sequence variant" id="VAR_065857" description="In MLC2A; dbSNP:rs1555055028." evidence="9">
    <original>P</original>
    <variation>S</variation>
    <location>
        <position position="148"/>
    </location>
</feature>
<feature type="sequence variant" id="VAR_065858" description="In MLC2A; dbSNP:rs387907049." evidence="9">
    <original>S</original>
    <variation>Y</variation>
    <location>
        <position position="196"/>
    </location>
</feature>
<feature type="sequence variant" id="VAR_065859" description="In MLC2A; dbSNP:rs387907051." evidence="9">
    <original>D</original>
    <variation>N</variation>
    <location>
        <position position="211"/>
    </location>
</feature>
<feature type="sequence variant" id="VAR_034731" description="In dbSNP:rs10790715." evidence="5 6">
    <original>M</original>
    <variation>V</variation>
    <location>
        <position position="218"/>
    </location>
</feature>
<feature type="sequence variant" id="VAR_065860" description="In MLC2B; dbSNP:rs149782549." evidence="9">
    <original>R</original>
    <variation>C</variation>
    <location>
        <position position="288"/>
    </location>
</feature>
<feature type="sequence conflict" description="In Ref. 1; AAQ93018." evidence="16" ref="1">
    <original>K</original>
    <variation>E</variation>
    <location>
        <position position="2"/>
    </location>
</feature>
<feature type="sequence conflict" description="In Ref. 2; BAC85486." evidence="16" ref="2">
    <original>Y</original>
    <variation>S</variation>
    <location>
        <position position="95"/>
    </location>
</feature>
<feature type="sequence conflict" description="In Ref. 1; AAQ93018." evidence="16" ref="1">
    <original>Q</original>
    <variation>R</variation>
    <location>
        <position position="284"/>
    </location>
</feature>
<feature type="sequence conflict" description="In Ref. 4; CAD39081." evidence="16" ref="4">
    <location>
        <position position="293"/>
    </location>
</feature>
<keyword id="KW-0002">3D-structure</keyword>
<keyword id="KW-0025">Alternative splicing</keyword>
<keyword id="KW-0130">Cell adhesion</keyword>
<keyword id="KW-0131">Cell cycle</keyword>
<keyword id="KW-1003">Cell membrane</keyword>
<keyword id="KW-0963">Cytoplasm</keyword>
<keyword id="KW-0225">Disease variant</keyword>
<keyword id="KW-1015">Disulfide bond</keyword>
<keyword id="KW-0325">Glycoprotein</keyword>
<keyword id="KW-0338">Growth arrest</keyword>
<keyword id="KW-0341">Growth regulation</keyword>
<keyword id="KW-0393">Immunoglobulin domain</keyword>
<keyword id="KW-0472">Membrane</keyword>
<keyword id="KW-0597">Phosphoprotein</keyword>
<keyword id="KW-1267">Proteomics identification</keyword>
<keyword id="KW-1185">Reference proteome</keyword>
<keyword id="KW-0732">Signal</keyword>
<keyword id="KW-0812">Transmembrane</keyword>
<keyword id="KW-1133">Transmembrane helix</keyword>
<comment type="function">
    <text evidence="7 8 11">Involved in regulating cell motility and cell-matrix interactions. May inhibit cell growth through suppression of cell proliferation (PubMed:15885354, PubMed:15917256). In glia, associates and targets CLCN2 at astrocytic processes and myelinated fiber tracts where it may regulate transcellular chloride flux involved in neuron excitability (PubMed:22405205).</text>
</comment>
<comment type="subunit">
    <text evidence="8 10 11">Homodimer. Dimer formation occurs predominantly through cis interactions on the cell surface. Part of a complex containing MLC1, TRPV4, AQP4 and ATP1B1 (PubMed:15917256, PubMed:22328087). Interacts with CLCN2 (PubMed:22405205).</text>
</comment>
<comment type="subcellular location">
    <subcellularLocation>
        <location evidence="7 8">Cytoplasm</location>
    </subcellularLocation>
    <subcellularLocation>
        <location evidence="11">Cell membrane</location>
        <topology>Single-pass type I membrane protein</topology>
        <orientation evidence="7 8">Cytoplasmic side</orientation>
    </subcellularLocation>
    <text evidence="1">Colocalizes with CLCN2 at astrocyte end-foot in contact with brain capillaries and other glial cells (By similarity). In MCF-7 breast carcinoma and hepatic Hep 3B2.1-7 and Hep-G2 cell lines, localization of HEPACAM is cell density-dependent. In well spread cells, localized to punctate structures in the perinuclear membrane, cytoplasm, and at cell surface of protusions. In confluent cells, localized predominantly to the cytoplasmic membrane, particularly in areas of cell-cell contacts. Colocalizes with CDH1.</text>
</comment>
<comment type="alternative products">
    <event type="alternative splicing"/>
    <isoform>
        <id>Q14CZ8-1</id>
        <name evidence="7">1</name>
        <sequence type="displayed"/>
    </isoform>
    <isoform>
        <id>Q14CZ8-2</id>
        <name evidence="5">2</name>
        <sequence type="described" ref="VSP_052497 VSP_052498"/>
    </isoform>
</comment>
<comment type="induction">
    <text evidence="7">Down-regulated in 20 out of 23 of hepatocellular carcinoma (HCC) samples and is undetectable in 5 HCC cell lines tested.</text>
</comment>
<comment type="domain">
    <text evidence="8">The cytoplasmic domain plays an important role in regulation of cell-matrix adhesion and cell motility.</text>
</comment>
<comment type="PTM">
    <text evidence="7 8">N-glycosylated.</text>
</comment>
<comment type="disease" evidence="9 11">
    <disease id="DI-03113">
        <name>Megalencephalic leukoencephalopathy with subcortical cysts 2A</name>
        <acronym>MLC2A</acronym>
        <description>A neurodegenerative disorder characterized by infantile-onset macrocephaly and later onset of motor deterioration, with ataxia and spasticity, seizures, and cognitive decline of variable severity. The brain appears swollen on magnetic resonance imaging with white-matter abnormalities and subcortical cysts, in all stages of the disease.</description>
        <dbReference type="MIM" id="613925"/>
    </disease>
    <text>The disease is caused by variants affecting the gene represented in this entry.</text>
</comment>
<comment type="disease" evidence="9 11">
    <disease id="DI-03114">
        <name>Megalencephalic leukoencephalopathy with subcortical cysts 2B, remitting, with or without impaired intellectual development</name>
        <acronym>MLC2B</acronym>
        <description>A neurodegenerative disorder characterized by infantile-onset of macrocephaly and mildly delayed motor development associated with white-matter abnormalities on brain magnetic resonance imaging. The phenotype is milder that MLC2A, with better preserved cerebellar white matter and no subcortical cysts outside the temporal region. On follow-up, patients show normal or almost normal motor function. Some patients have normal intelligence, whereas others have a significant cognitive deficiency.</description>
        <dbReference type="MIM" id="613926"/>
    </disease>
    <text>The disease is caused by variants affecting the gene represented in this entry.</text>
</comment>
<comment type="miscellaneous">
    <text evidence="12">Antibodies that recognize both Epstein-Barr virus EBNA1 and HEPACAM/GlialCAM can be produced when B cells undergo somatic hypermutations. HEPACAM/GlialCAM can thus become an autoantigen for self-directed autoimmunity and possibly contribute to the events leading to multiple sclerosis.</text>
</comment>
<reference evidence="16 18" key="1">
    <citation type="journal article" date="2005" name="J. Hepatol.">
        <title>Cloning and characterization of hepaCAM, a novel Ig-like cell adhesion molecule suppressed in human hepatocellular carcinoma.</title>
        <authorList>
            <person name="Moh M.C."/>
            <person name="Lee L.H."/>
            <person name="Shen S."/>
        </authorList>
    </citation>
    <scope>NUCLEOTIDE SEQUENCE [MRNA] (ISOFORM 1)</scope>
    <scope>FUNCTION</scope>
    <scope>SUBCELLULAR LOCATION</scope>
    <scope>INDUCTION</scope>
    <scope>GLYCOSYLATION</scope>
    <source>
        <tissue evidence="18">Liver</tissue>
    </source>
</reference>
<reference evidence="16 19" key="2">
    <citation type="journal article" date="2004" name="Nat. Genet.">
        <title>Complete sequencing and characterization of 21,243 full-length human cDNAs.</title>
        <authorList>
            <person name="Ota T."/>
            <person name="Suzuki Y."/>
            <person name="Nishikawa T."/>
            <person name="Otsuki T."/>
            <person name="Sugiyama T."/>
            <person name="Irie R."/>
            <person name="Wakamatsu A."/>
            <person name="Hayashi K."/>
            <person name="Sato H."/>
            <person name="Nagai K."/>
            <person name="Kimura K."/>
            <person name="Makita H."/>
            <person name="Sekine M."/>
            <person name="Obayashi M."/>
            <person name="Nishi T."/>
            <person name="Shibahara T."/>
            <person name="Tanaka T."/>
            <person name="Ishii S."/>
            <person name="Yamamoto J."/>
            <person name="Saito K."/>
            <person name="Kawai Y."/>
            <person name="Isono Y."/>
            <person name="Nakamura Y."/>
            <person name="Nagahari K."/>
            <person name="Murakami K."/>
            <person name="Yasuda T."/>
            <person name="Iwayanagi T."/>
            <person name="Wagatsuma M."/>
            <person name="Shiratori A."/>
            <person name="Sudo H."/>
            <person name="Hosoiri T."/>
            <person name="Kaku Y."/>
            <person name="Kodaira H."/>
            <person name="Kondo H."/>
            <person name="Sugawara M."/>
            <person name="Takahashi M."/>
            <person name="Kanda K."/>
            <person name="Yokoi T."/>
            <person name="Furuya T."/>
            <person name="Kikkawa E."/>
            <person name="Omura Y."/>
            <person name="Abe K."/>
            <person name="Kamihara K."/>
            <person name="Katsuta N."/>
            <person name="Sato K."/>
            <person name="Tanikawa M."/>
            <person name="Yamazaki M."/>
            <person name="Ninomiya K."/>
            <person name="Ishibashi T."/>
            <person name="Yamashita H."/>
            <person name="Murakawa K."/>
            <person name="Fujimori K."/>
            <person name="Tanai H."/>
            <person name="Kimata M."/>
            <person name="Watanabe M."/>
            <person name="Hiraoka S."/>
            <person name="Chiba Y."/>
            <person name="Ishida S."/>
            <person name="Ono Y."/>
            <person name="Takiguchi S."/>
            <person name="Watanabe S."/>
            <person name="Yosida M."/>
            <person name="Hotuta T."/>
            <person name="Kusano J."/>
            <person name="Kanehori K."/>
            <person name="Takahashi-Fujii A."/>
            <person name="Hara H."/>
            <person name="Tanase T.-O."/>
            <person name="Nomura Y."/>
            <person name="Togiya S."/>
            <person name="Komai F."/>
            <person name="Hara R."/>
            <person name="Takeuchi K."/>
            <person name="Arita M."/>
            <person name="Imose N."/>
            <person name="Musashino K."/>
            <person name="Yuuki H."/>
            <person name="Oshima A."/>
            <person name="Sasaki N."/>
            <person name="Aotsuka S."/>
            <person name="Yoshikawa Y."/>
            <person name="Matsunawa H."/>
            <person name="Ichihara T."/>
            <person name="Shiohata N."/>
            <person name="Sano S."/>
            <person name="Moriya S."/>
            <person name="Momiyama H."/>
            <person name="Satoh N."/>
            <person name="Takami S."/>
            <person name="Terashima Y."/>
            <person name="Suzuki O."/>
            <person name="Nakagawa S."/>
            <person name="Senoh A."/>
            <person name="Mizoguchi H."/>
            <person name="Goto Y."/>
            <person name="Shimizu F."/>
            <person name="Wakebe H."/>
            <person name="Hishigaki H."/>
            <person name="Watanabe T."/>
            <person name="Sugiyama A."/>
            <person name="Takemoto M."/>
            <person name="Kawakami B."/>
            <person name="Yamazaki M."/>
            <person name="Watanabe K."/>
            <person name="Kumagai A."/>
            <person name="Itakura S."/>
            <person name="Fukuzumi Y."/>
            <person name="Fujimori Y."/>
            <person name="Komiyama M."/>
            <person name="Tashiro H."/>
            <person name="Tanigami A."/>
            <person name="Fujiwara T."/>
            <person name="Ono T."/>
            <person name="Yamada K."/>
            <person name="Fujii Y."/>
            <person name="Ozaki K."/>
            <person name="Hirao M."/>
            <person name="Ohmori Y."/>
            <person name="Kawabata A."/>
            <person name="Hikiji T."/>
            <person name="Kobatake N."/>
            <person name="Inagaki H."/>
            <person name="Ikema Y."/>
            <person name="Okamoto S."/>
            <person name="Okitani R."/>
            <person name="Kawakami T."/>
            <person name="Noguchi S."/>
            <person name="Itoh T."/>
            <person name="Shigeta K."/>
            <person name="Senba T."/>
            <person name="Matsumura K."/>
            <person name="Nakajima Y."/>
            <person name="Mizuno T."/>
            <person name="Morinaga M."/>
            <person name="Sasaki M."/>
            <person name="Togashi T."/>
            <person name="Oyama M."/>
            <person name="Hata H."/>
            <person name="Watanabe M."/>
            <person name="Komatsu T."/>
            <person name="Mizushima-Sugano J."/>
            <person name="Satoh T."/>
            <person name="Shirai Y."/>
            <person name="Takahashi Y."/>
            <person name="Nakagawa K."/>
            <person name="Okumura K."/>
            <person name="Nagase T."/>
            <person name="Nomura N."/>
            <person name="Kikuchi H."/>
            <person name="Masuho Y."/>
            <person name="Yamashita R."/>
            <person name="Nakai K."/>
            <person name="Yada T."/>
            <person name="Nakamura Y."/>
            <person name="Ohara O."/>
            <person name="Isogai T."/>
            <person name="Sugano S."/>
        </authorList>
    </citation>
    <scope>NUCLEOTIDE SEQUENCE [LARGE SCALE MRNA] (ISOFORMS 1 AND 2)</scope>
    <scope>VARIANT VAL-218</scope>
    <source>
        <tissue evidence="19">Brain</tissue>
    </source>
</reference>
<reference evidence="16 17" key="3">
    <citation type="journal article" date="2004" name="Genome Res.">
        <title>The status, quality, and expansion of the NIH full-length cDNA project: the Mammalian Gene Collection (MGC).</title>
        <authorList>
            <consortium name="The MGC Project Team"/>
        </authorList>
    </citation>
    <scope>NUCLEOTIDE SEQUENCE [LARGE SCALE MRNA] (ISOFORM 1)</scope>
    <scope>VARIANT VAL-218</scope>
    <source>
        <tissue evidence="17">Brain</tissue>
    </source>
</reference>
<reference key="4">
    <citation type="journal article" date="2007" name="BMC Genomics">
        <title>The full-ORF clone resource of the German cDNA consortium.</title>
        <authorList>
            <person name="Bechtel S."/>
            <person name="Rosenfelder H."/>
            <person name="Duda A."/>
            <person name="Schmidt C.P."/>
            <person name="Ernst U."/>
            <person name="Wellenreuther R."/>
            <person name="Mehrle A."/>
            <person name="Schuster C."/>
            <person name="Bahr A."/>
            <person name="Bloecker H."/>
            <person name="Heubner D."/>
            <person name="Hoerlein A."/>
            <person name="Michel G."/>
            <person name="Wedler H."/>
            <person name="Koehrer K."/>
            <person name="Ottenwaelder B."/>
            <person name="Poustka A."/>
            <person name="Wiemann S."/>
            <person name="Schupp I."/>
        </authorList>
    </citation>
    <scope>NUCLEOTIDE SEQUENCE [LARGE SCALE MRNA] OF 251-416 (ISOFORM 1)</scope>
    <source>
        <tissue>Fetal brain</tissue>
    </source>
</reference>
<reference evidence="16" key="5">
    <citation type="journal article" date="2005" name="J. Biol. Chem.">
        <title>Structural and functional analyses of a novel Ig-like cell adhesion molecule, hepaCAM, in the human breast carcinoma MCF7 cells.</title>
        <authorList>
            <person name="Moh M.C."/>
            <person name="Zhang C."/>
            <person name="Luo C."/>
            <person name="Lee L.H."/>
            <person name="Shen S."/>
        </authorList>
    </citation>
    <scope>FUNCTION</scope>
    <scope>SUBUNIT</scope>
    <scope>SUBCELLULAR LOCATION</scope>
    <scope>TOPOLOGY</scope>
    <scope>DOMAIN</scope>
    <scope>GLYCOSYLATION</scope>
    <scope>PHOSPHORYLATION</scope>
</reference>
<reference key="6">
    <citation type="journal article" date="2012" name="Hum. Mol. Genet.">
        <title>Megalencephalic leukoencephalopathy with subcortical cysts protein 1 functionally cooperates with the TRPV4 cation channel to activate the response of astrocytes to osmotic stress: dysregulation by pathological mutations.</title>
        <authorList>
            <person name="Lanciotti A."/>
            <person name="Brignone M.S."/>
            <person name="Molinari P."/>
            <person name="Visentin S."/>
            <person name="De Nuccio C."/>
            <person name="Macchia G."/>
            <person name="Aiello C."/>
            <person name="Bertini E."/>
            <person name="Aloisi F."/>
            <person name="Petrucci T.C."/>
            <person name="Ambrosini E."/>
        </authorList>
    </citation>
    <scope>SUBUNIT</scope>
</reference>
<reference key="7">
    <citation type="journal article" date="2012" name="Neuron">
        <title>GlialCAM, a protein defective in a leukodystrophy, serves as a ClC-2 Cl(-) channel auxiliary subunit.</title>
        <authorList>
            <person name="Jeworutzki E."/>
            <person name="Lopez-Hernandez T."/>
            <person name="Capdevila-Nortes X."/>
            <person name="Sirisi S."/>
            <person name="Bengtsson L."/>
            <person name="Montolio M."/>
            <person name="Zifarelli G."/>
            <person name="Arnedo T."/>
            <person name="Mueller C.S."/>
            <person name="Schulte U."/>
            <person name="Nunes V."/>
            <person name="Martinez A."/>
            <person name="Jentsch T.J."/>
            <person name="Gasull X."/>
            <person name="Pusch M."/>
            <person name="Estevez R."/>
        </authorList>
    </citation>
    <scope>FUNCTION</scope>
    <scope>INTERACTION WITH CLCN2</scope>
    <scope>SUBCELLULAR LOCATION</scope>
    <scope>CHARACTERIZATION OF VARIANTS MLC2A GLN-92 AND CYS-98</scope>
    <scope>CHARACTERIZATION OF VARIANTS MLC2B ASP-89 AND TRP-92</scope>
</reference>
<reference key="8">
    <citation type="journal article" date="2014" name="J. Proteomics">
        <title>An enzyme assisted RP-RPLC approach for in-depth analysis of human liver phosphoproteome.</title>
        <authorList>
            <person name="Bian Y."/>
            <person name="Song C."/>
            <person name="Cheng K."/>
            <person name="Dong M."/>
            <person name="Wang F."/>
            <person name="Huang J."/>
            <person name="Sun D."/>
            <person name="Wang L."/>
            <person name="Ye M."/>
            <person name="Zou H."/>
        </authorList>
    </citation>
    <scope>IDENTIFICATION BY MASS SPECTROMETRY [LARGE SCALE ANALYSIS]</scope>
    <source>
        <tissue>Liver</tissue>
    </source>
</reference>
<reference key="9">
    <citation type="journal article" date="2022" name="Nature">
        <title>Clonally expanded B cells in multiple sclerosis bind EBV EBNA1 and GlialCAM.</title>
        <authorList>
            <person name="Lanz T.V."/>
            <person name="Brewer R.C."/>
            <person name="Ho P.P."/>
            <person name="Moon J.S."/>
            <person name="Jude K.M."/>
            <person name="Fernandez D."/>
            <person name="Fernandes R.A."/>
            <person name="Gomez A.M."/>
            <person name="Nadj G.S."/>
            <person name="Bartley C.M."/>
            <person name="Schubert R.D."/>
            <person name="Hawes I.A."/>
            <person name="Vazquez S.E."/>
            <person name="Iyer M."/>
            <person name="Zuchero J.B."/>
            <person name="Teegen B."/>
            <person name="Dunn J.E."/>
            <person name="Lock C.B."/>
            <person name="Kipp L.B."/>
            <person name="Cotham V.C."/>
            <person name="Ueberheide B.M."/>
            <person name="Aftab B.T."/>
            <person name="Anderson M.S."/>
            <person name="DeRisi J.L."/>
            <person name="Wilson M.R."/>
            <person name="Bashford-Rogers R.J.M."/>
            <person name="Platten M."/>
            <person name="Garcia K.C."/>
            <person name="Steinman L."/>
            <person name="Robinson W.H."/>
        </authorList>
    </citation>
    <scope>MOLECULAR MIMICRY WITH EPSTEIN-BARR VIRUS EBNA1</scope>
</reference>
<reference key="10">
    <citation type="journal article" date="2011" name="Am. J. Hum. Genet.">
        <title>Mutant GlialCAM causes megalencephalic leukoencephalopathy with subcortical cysts, benign familial macrocephaly, and macrocephaly with retardation and autism.</title>
        <authorList>
            <person name="Lopez-Hernandez T."/>
            <person name="Ridder M.C."/>
            <person name="Montolio M."/>
            <person name="Capdevila-Nortes X."/>
            <person name="Polder E."/>
            <person name="Sirisi S."/>
            <person name="Duarri A."/>
            <person name="Schulte U."/>
            <person name="Fakler B."/>
            <person name="Nunes V."/>
            <person name="Scheper G.C."/>
            <person name="Martinez A."/>
            <person name="Estevez R."/>
            <person name="van der Knaap M.S."/>
        </authorList>
    </citation>
    <scope>VARIANTS MLC2A HIS-23; GLN-92; CYS-98; SER-148; TYR-196 AND ASN-211</scope>
    <scope>VARIANTS MLC2B ASP-89; SER-89; TRP-92; ASN-128; LYS-135 DEL AND CYS-288</scope>
</reference>